<evidence type="ECO:0000255" key="1">
    <source>
        <dbReference type="HAMAP-Rule" id="MF_00196"/>
    </source>
</evidence>
<proteinExistence type="inferred from homology"/>
<sequence>MKALHFGAGNIGRGFIGKLLADAGIQLTFADVNQVVLDALNARHSYQVHVVGENEQVDTVSGVNAVSSIGDDVVDLIAHVDLITTAVGPVVLERIAPAIAKGLVKRKAQGVDAPLNIIACENMVRGTTQLKGHVMNALADGDKAWVEQHVGFVDSAVDRIVPPSASATNDPLEVTVETFSEWIVDKTQFKGALPNIPGMELTDNLMAFVERKLFTLNTGHAITAYLGKLAGHQTIRDAILDESIRAVVKGAMEESGAVLIKRYGFDADKHAAYIQKILGRFENPYLKDDVERVGRQPLRKLSAGDRLIKPLLGTLEYGLPHVNLVKGIAAAMHFRSDEDPQAQELAALITEKGPQAALAQISGLDANSDVVAEAVNAYNATK</sequence>
<feature type="chain" id="PRO_1000099200" description="Mannitol-1-phosphate 5-dehydrogenase">
    <location>
        <begin position="1"/>
        <end position="382"/>
    </location>
</feature>
<feature type="binding site" evidence="1">
    <location>
        <begin position="3"/>
        <end position="14"/>
    </location>
    <ligand>
        <name>NAD(+)</name>
        <dbReference type="ChEBI" id="CHEBI:57540"/>
    </ligand>
</feature>
<accession>B4SX95</accession>
<reference key="1">
    <citation type="journal article" date="2011" name="J. Bacteriol.">
        <title>Comparative genomics of 28 Salmonella enterica isolates: evidence for CRISPR-mediated adaptive sublineage evolution.</title>
        <authorList>
            <person name="Fricke W.F."/>
            <person name="Mammel M.K."/>
            <person name="McDermott P.F."/>
            <person name="Tartera C."/>
            <person name="White D.G."/>
            <person name="Leclerc J.E."/>
            <person name="Ravel J."/>
            <person name="Cebula T.A."/>
        </authorList>
    </citation>
    <scope>NUCLEOTIDE SEQUENCE [LARGE SCALE GENOMIC DNA]</scope>
    <source>
        <strain>SL254</strain>
    </source>
</reference>
<organism>
    <name type="scientific">Salmonella newport (strain SL254)</name>
    <dbReference type="NCBI Taxonomy" id="423368"/>
    <lineage>
        <taxon>Bacteria</taxon>
        <taxon>Pseudomonadati</taxon>
        <taxon>Pseudomonadota</taxon>
        <taxon>Gammaproteobacteria</taxon>
        <taxon>Enterobacterales</taxon>
        <taxon>Enterobacteriaceae</taxon>
        <taxon>Salmonella</taxon>
    </lineage>
</organism>
<comment type="catalytic activity">
    <reaction evidence="1">
        <text>D-mannitol 1-phosphate + NAD(+) = beta-D-fructose 6-phosphate + NADH + H(+)</text>
        <dbReference type="Rhea" id="RHEA:19661"/>
        <dbReference type="ChEBI" id="CHEBI:15378"/>
        <dbReference type="ChEBI" id="CHEBI:57540"/>
        <dbReference type="ChEBI" id="CHEBI:57634"/>
        <dbReference type="ChEBI" id="CHEBI:57945"/>
        <dbReference type="ChEBI" id="CHEBI:61381"/>
        <dbReference type="EC" id="1.1.1.17"/>
    </reaction>
</comment>
<comment type="similarity">
    <text evidence="1">Belongs to the mannitol dehydrogenase family.</text>
</comment>
<protein>
    <recommendedName>
        <fullName evidence="1">Mannitol-1-phosphate 5-dehydrogenase</fullName>
        <ecNumber evidence="1">1.1.1.17</ecNumber>
    </recommendedName>
</protein>
<gene>
    <name evidence="1" type="primary">mtlD</name>
    <name type="ordered locus">SNSL254_A3964</name>
</gene>
<name>MTLD_SALNS</name>
<dbReference type="EC" id="1.1.1.17" evidence="1"/>
<dbReference type="EMBL" id="CP001113">
    <property type="protein sequence ID" value="ACF64633.1"/>
    <property type="molecule type" value="Genomic_DNA"/>
</dbReference>
<dbReference type="RefSeq" id="WP_000645391.1">
    <property type="nucleotide sequence ID" value="NZ_CCMR01000004.1"/>
</dbReference>
<dbReference type="SMR" id="B4SX95"/>
<dbReference type="KEGG" id="see:SNSL254_A3964"/>
<dbReference type="HOGENOM" id="CLU_036089_2_0_6"/>
<dbReference type="Proteomes" id="UP000008824">
    <property type="component" value="Chromosome"/>
</dbReference>
<dbReference type="GO" id="GO:0005829">
    <property type="term" value="C:cytosol"/>
    <property type="evidence" value="ECO:0007669"/>
    <property type="project" value="TreeGrafter"/>
</dbReference>
<dbReference type="GO" id="GO:0008926">
    <property type="term" value="F:mannitol-1-phosphate 5-dehydrogenase activity"/>
    <property type="evidence" value="ECO:0007669"/>
    <property type="project" value="UniProtKB-UniRule"/>
</dbReference>
<dbReference type="GO" id="GO:0019592">
    <property type="term" value="P:mannitol catabolic process"/>
    <property type="evidence" value="ECO:0007669"/>
    <property type="project" value="TreeGrafter"/>
</dbReference>
<dbReference type="FunFam" id="1.10.1040.10:FF:000009">
    <property type="entry name" value="Mannitol-1-phosphate 5-dehydrogenase"/>
    <property type="match status" value="1"/>
</dbReference>
<dbReference type="FunFam" id="3.40.50.720:FF:000075">
    <property type="entry name" value="Mannitol-1-phosphate 5-dehydrogenase"/>
    <property type="match status" value="1"/>
</dbReference>
<dbReference type="Gene3D" id="1.10.1040.10">
    <property type="entry name" value="N-(1-d-carboxylethyl)-l-norvaline Dehydrogenase, domain 2"/>
    <property type="match status" value="1"/>
</dbReference>
<dbReference type="Gene3D" id="3.40.50.720">
    <property type="entry name" value="NAD(P)-binding Rossmann-like Domain"/>
    <property type="match status" value="1"/>
</dbReference>
<dbReference type="HAMAP" id="MF_00196">
    <property type="entry name" value="Mannitol_dehydrog"/>
    <property type="match status" value="1"/>
</dbReference>
<dbReference type="InterPro" id="IPR008927">
    <property type="entry name" value="6-PGluconate_DH-like_C_sf"/>
</dbReference>
<dbReference type="InterPro" id="IPR013328">
    <property type="entry name" value="6PGD_dom2"/>
</dbReference>
<dbReference type="InterPro" id="IPR023028">
    <property type="entry name" value="Mannitol_1_phos_5_DH"/>
</dbReference>
<dbReference type="InterPro" id="IPR000669">
    <property type="entry name" value="Mannitol_DH"/>
</dbReference>
<dbReference type="InterPro" id="IPR013118">
    <property type="entry name" value="Mannitol_DH_C"/>
</dbReference>
<dbReference type="InterPro" id="IPR023027">
    <property type="entry name" value="Mannitol_DH_CS"/>
</dbReference>
<dbReference type="InterPro" id="IPR013131">
    <property type="entry name" value="Mannitol_DH_N"/>
</dbReference>
<dbReference type="InterPro" id="IPR036291">
    <property type="entry name" value="NAD(P)-bd_dom_sf"/>
</dbReference>
<dbReference type="NCBIfam" id="NF002646">
    <property type="entry name" value="PRK02318.1-2"/>
    <property type="match status" value="1"/>
</dbReference>
<dbReference type="NCBIfam" id="NF002647">
    <property type="entry name" value="PRK02318.1-3"/>
    <property type="match status" value="1"/>
</dbReference>
<dbReference type="NCBIfam" id="NF002648">
    <property type="entry name" value="PRK02318.1-4"/>
    <property type="match status" value="1"/>
</dbReference>
<dbReference type="NCBIfam" id="NF002650">
    <property type="entry name" value="PRK02318.2-2"/>
    <property type="match status" value="1"/>
</dbReference>
<dbReference type="NCBIfam" id="NF002652">
    <property type="entry name" value="PRK02318.2-5"/>
    <property type="match status" value="1"/>
</dbReference>
<dbReference type="PANTHER" id="PTHR30524:SF0">
    <property type="entry name" value="ALTRONATE OXIDOREDUCTASE-RELATED"/>
    <property type="match status" value="1"/>
</dbReference>
<dbReference type="PANTHER" id="PTHR30524">
    <property type="entry name" value="MANNITOL-1-PHOSPHATE 5-DEHYDROGENASE"/>
    <property type="match status" value="1"/>
</dbReference>
<dbReference type="Pfam" id="PF01232">
    <property type="entry name" value="Mannitol_dh"/>
    <property type="match status" value="1"/>
</dbReference>
<dbReference type="Pfam" id="PF08125">
    <property type="entry name" value="Mannitol_dh_C"/>
    <property type="match status" value="1"/>
</dbReference>
<dbReference type="PRINTS" id="PR00084">
    <property type="entry name" value="MTLDHDRGNASE"/>
</dbReference>
<dbReference type="SUPFAM" id="SSF48179">
    <property type="entry name" value="6-phosphogluconate dehydrogenase C-terminal domain-like"/>
    <property type="match status" value="1"/>
</dbReference>
<dbReference type="SUPFAM" id="SSF51735">
    <property type="entry name" value="NAD(P)-binding Rossmann-fold domains"/>
    <property type="match status" value="1"/>
</dbReference>
<dbReference type="PROSITE" id="PS00974">
    <property type="entry name" value="MANNITOL_DHGENASE"/>
    <property type="match status" value="1"/>
</dbReference>
<keyword id="KW-0520">NAD</keyword>
<keyword id="KW-0560">Oxidoreductase</keyword>